<feature type="chain" id="PRO_0000297449" description="Erythronate-4-phosphate dehydrogenase">
    <location>
        <begin position="1"/>
        <end position="373"/>
    </location>
</feature>
<feature type="active site" evidence="1">
    <location>
        <position position="209"/>
    </location>
</feature>
<feature type="active site" evidence="1">
    <location>
        <position position="238"/>
    </location>
</feature>
<feature type="active site" description="Proton donor" evidence="1">
    <location>
        <position position="255"/>
    </location>
</feature>
<feature type="binding site" evidence="1">
    <location>
        <position position="45"/>
    </location>
    <ligand>
        <name>substrate</name>
    </ligand>
</feature>
<feature type="binding site" evidence="1">
    <location>
        <position position="67"/>
    </location>
    <ligand>
        <name>substrate</name>
    </ligand>
</feature>
<feature type="binding site" evidence="1">
    <location>
        <position position="147"/>
    </location>
    <ligand>
        <name>NAD(+)</name>
        <dbReference type="ChEBI" id="CHEBI:57540"/>
    </ligand>
</feature>
<feature type="binding site" evidence="1">
    <location>
        <begin position="207"/>
        <end position="209"/>
    </location>
    <ligand>
        <name>NAD(+)</name>
        <dbReference type="ChEBI" id="CHEBI:57540"/>
    </ligand>
</feature>
<feature type="binding site" evidence="1">
    <location>
        <position position="233"/>
    </location>
    <ligand>
        <name>NAD(+)</name>
        <dbReference type="ChEBI" id="CHEBI:57540"/>
    </ligand>
</feature>
<feature type="binding site" evidence="1">
    <location>
        <position position="258"/>
    </location>
    <ligand>
        <name>NAD(+)</name>
        <dbReference type="ChEBI" id="CHEBI:57540"/>
    </ligand>
</feature>
<gene>
    <name evidence="1" type="primary">pdxB</name>
    <name type="ordered locus">PSHAa2079</name>
</gene>
<reference key="1">
    <citation type="journal article" date="2005" name="Genome Res.">
        <title>Coping with cold: the genome of the versatile marine Antarctica bacterium Pseudoalteromonas haloplanktis TAC125.</title>
        <authorList>
            <person name="Medigue C."/>
            <person name="Krin E."/>
            <person name="Pascal G."/>
            <person name="Barbe V."/>
            <person name="Bernsel A."/>
            <person name="Bertin P.N."/>
            <person name="Cheung F."/>
            <person name="Cruveiller S."/>
            <person name="D'Amico S."/>
            <person name="Duilio A."/>
            <person name="Fang G."/>
            <person name="Feller G."/>
            <person name="Ho C."/>
            <person name="Mangenot S."/>
            <person name="Marino G."/>
            <person name="Nilsson J."/>
            <person name="Parrilli E."/>
            <person name="Rocha E.P.C."/>
            <person name="Rouy Z."/>
            <person name="Sekowska A."/>
            <person name="Tutino M.L."/>
            <person name="Vallenet D."/>
            <person name="von Heijne G."/>
            <person name="Danchin A."/>
        </authorList>
    </citation>
    <scope>NUCLEOTIDE SEQUENCE [LARGE SCALE GENOMIC DNA]</scope>
    <source>
        <strain>TAC 125</strain>
    </source>
</reference>
<keyword id="KW-0963">Cytoplasm</keyword>
<keyword id="KW-0520">NAD</keyword>
<keyword id="KW-0560">Oxidoreductase</keyword>
<keyword id="KW-0664">Pyridoxine biosynthesis</keyword>
<keyword id="KW-1185">Reference proteome</keyword>
<name>PDXB_PSET1</name>
<proteinExistence type="inferred from homology"/>
<organism>
    <name type="scientific">Pseudoalteromonas translucida (strain TAC 125)</name>
    <dbReference type="NCBI Taxonomy" id="326442"/>
    <lineage>
        <taxon>Bacteria</taxon>
        <taxon>Pseudomonadati</taxon>
        <taxon>Pseudomonadota</taxon>
        <taxon>Gammaproteobacteria</taxon>
        <taxon>Alteromonadales</taxon>
        <taxon>Pseudoalteromonadaceae</taxon>
        <taxon>Pseudoalteromonas</taxon>
    </lineage>
</organism>
<dbReference type="EC" id="1.1.1.290" evidence="1"/>
<dbReference type="EMBL" id="CR954246">
    <property type="protein sequence ID" value="CAI87135.1"/>
    <property type="molecule type" value="Genomic_DNA"/>
</dbReference>
<dbReference type="SMR" id="Q3IF36"/>
<dbReference type="STRING" id="326442.PSHAa2079"/>
<dbReference type="KEGG" id="pha:PSHAa2079"/>
<dbReference type="PATRIC" id="fig|326442.8.peg.2006"/>
<dbReference type="eggNOG" id="COG0111">
    <property type="taxonomic scope" value="Bacteria"/>
</dbReference>
<dbReference type="HOGENOM" id="CLU_019796_4_0_6"/>
<dbReference type="BioCyc" id="PHAL326442:PSHA_RS10290-MONOMER"/>
<dbReference type="UniPathway" id="UPA00244">
    <property type="reaction ID" value="UER00310"/>
</dbReference>
<dbReference type="Proteomes" id="UP000006843">
    <property type="component" value="Chromosome I"/>
</dbReference>
<dbReference type="GO" id="GO:0005829">
    <property type="term" value="C:cytosol"/>
    <property type="evidence" value="ECO:0007669"/>
    <property type="project" value="TreeGrafter"/>
</dbReference>
<dbReference type="GO" id="GO:0033711">
    <property type="term" value="F:4-phosphoerythronate dehydrogenase activity"/>
    <property type="evidence" value="ECO:0007669"/>
    <property type="project" value="UniProtKB-EC"/>
</dbReference>
<dbReference type="GO" id="GO:0051287">
    <property type="term" value="F:NAD binding"/>
    <property type="evidence" value="ECO:0007669"/>
    <property type="project" value="InterPro"/>
</dbReference>
<dbReference type="GO" id="GO:0046983">
    <property type="term" value="F:protein dimerization activity"/>
    <property type="evidence" value="ECO:0007669"/>
    <property type="project" value="InterPro"/>
</dbReference>
<dbReference type="GO" id="GO:0036001">
    <property type="term" value="P:'de novo' pyridoxal 5'-phosphate biosynthetic process"/>
    <property type="evidence" value="ECO:0007669"/>
    <property type="project" value="TreeGrafter"/>
</dbReference>
<dbReference type="GO" id="GO:0008615">
    <property type="term" value="P:pyridoxine biosynthetic process"/>
    <property type="evidence" value="ECO:0007669"/>
    <property type="project" value="UniProtKB-UniRule"/>
</dbReference>
<dbReference type="CDD" id="cd12158">
    <property type="entry name" value="ErythrP_dh"/>
    <property type="match status" value="1"/>
</dbReference>
<dbReference type="Gene3D" id="3.30.1370.170">
    <property type="match status" value="1"/>
</dbReference>
<dbReference type="Gene3D" id="3.40.50.720">
    <property type="entry name" value="NAD(P)-binding Rossmann-like Domain"/>
    <property type="match status" value="2"/>
</dbReference>
<dbReference type="HAMAP" id="MF_01825">
    <property type="entry name" value="PdxB"/>
    <property type="match status" value="1"/>
</dbReference>
<dbReference type="InterPro" id="IPR006139">
    <property type="entry name" value="D-isomer_2_OHA_DH_cat_dom"/>
</dbReference>
<dbReference type="InterPro" id="IPR029752">
    <property type="entry name" value="D-isomer_DH_CS1"/>
</dbReference>
<dbReference type="InterPro" id="IPR006140">
    <property type="entry name" value="D-isomer_DH_NAD-bd"/>
</dbReference>
<dbReference type="InterPro" id="IPR020921">
    <property type="entry name" value="Erythronate-4-P_DHase"/>
</dbReference>
<dbReference type="InterPro" id="IPR024531">
    <property type="entry name" value="Erythronate-4-P_DHase_dimer"/>
</dbReference>
<dbReference type="InterPro" id="IPR036291">
    <property type="entry name" value="NAD(P)-bd_dom_sf"/>
</dbReference>
<dbReference type="InterPro" id="IPR038251">
    <property type="entry name" value="PdxB_dimer_sf"/>
</dbReference>
<dbReference type="PANTHER" id="PTHR42938">
    <property type="entry name" value="FORMATE DEHYDROGENASE 1"/>
    <property type="match status" value="1"/>
</dbReference>
<dbReference type="PANTHER" id="PTHR42938:SF9">
    <property type="entry name" value="FORMATE DEHYDROGENASE 1"/>
    <property type="match status" value="1"/>
</dbReference>
<dbReference type="Pfam" id="PF00389">
    <property type="entry name" value="2-Hacid_dh"/>
    <property type="match status" value="1"/>
</dbReference>
<dbReference type="Pfam" id="PF02826">
    <property type="entry name" value="2-Hacid_dh_C"/>
    <property type="match status" value="1"/>
</dbReference>
<dbReference type="Pfam" id="PF11890">
    <property type="entry name" value="DUF3410"/>
    <property type="match status" value="1"/>
</dbReference>
<dbReference type="SUPFAM" id="SSF52283">
    <property type="entry name" value="Formate/glycerate dehydrogenase catalytic domain-like"/>
    <property type="match status" value="1"/>
</dbReference>
<dbReference type="SUPFAM" id="SSF51735">
    <property type="entry name" value="NAD(P)-binding Rossmann-fold domains"/>
    <property type="match status" value="1"/>
</dbReference>
<dbReference type="PROSITE" id="PS00065">
    <property type="entry name" value="D_2_HYDROXYACID_DH_1"/>
    <property type="match status" value="1"/>
</dbReference>
<protein>
    <recommendedName>
        <fullName evidence="1">Erythronate-4-phosphate dehydrogenase</fullName>
        <ecNumber evidence="1">1.1.1.290</ecNumber>
    </recommendedName>
</protein>
<accession>Q3IF36</accession>
<sequence>MKILADQNMPLVEQYFADIGEVERFDGRQLTADQLIDVDVLLTRSVTQVNNELLAHANKLSFVGTATIGVDHIDTQLLNDKNIAFSSAPGCNAIAVAEYVISSLYALSQENARPLNNQTIGIVGVGSIGSCLAQKLQALNLTVLLCDPIKHAQGLLNEHVALDQLLAQSDIVTFHVPLIKSGEHKTLHMMDKARLKALKPGLTLINASRGDVIDNQALLEVMQAGADLDLVLDVWENEPTILIELLEHVRYASVHIAGHTLEGKARGTQILYQKFCELKGIEATKSLDEFLPVPAITQATLGQSFNEADIARLVHLIYDVRRDDGILLRDLANNGFDSLRKNYPVRREFSTLTIQGDSSQLAALAQLGFTVAN</sequence>
<comment type="function">
    <text evidence="1">Catalyzes the oxidation of erythronate-4-phosphate to 3-hydroxy-2-oxo-4-phosphonooxybutanoate.</text>
</comment>
<comment type="catalytic activity">
    <reaction evidence="1">
        <text>4-phospho-D-erythronate + NAD(+) = (R)-3-hydroxy-2-oxo-4-phosphooxybutanoate + NADH + H(+)</text>
        <dbReference type="Rhea" id="RHEA:18829"/>
        <dbReference type="ChEBI" id="CHEBI:15378"/>
        <dbReference type="ChEBI" id="CHEBI:57540"/>
        <dbReference type="ChEBI" id="CHEBI:57945"/>
        <dbReference type="ChEBI" id="CHEBI:58538"/>
        <dbReference type="ChEBI" id="CHEBI:58766"/>
        <dbReference type="EC" id="1.1.1.290"/>
    </reaction>
</comment>
<comment type="pathway">
    <text evidence="1">Cofactor biosynthesis; pyridoxine 5'-phosphate biosynthesis; pyridoxine 5'-phosphate from D-erythrose 4-phosphate: step 2/5.</text>
</comment>
<comment type="subunit">
    <text evidence="1">Homodimer.</text>
</comment>
<comment type="subcellular location">
    <subcellularLocation>
        <location evidence="1">Cytoplasm</location>
    </subcellularLocation>
</comment>
<comment type="similarity">
    <text evidence="1">Belongs to the D-isomer specific 2-hydroxyacid dehydrogenase family. PdxB subfamily.</text>
</comment>
<evidence type="ECO:0000255" key="1">
    <source>
        <dbReference type="HAMAP-Rule" id="MF_01825"/>
    </source>
</evidence>